<sequence length="183" mass="20322">MPVEKTLLILKPDAVARGLVGEIISRFEKAGLKIVALKMVKASPEEIERFYPSSEEWLRSAGQKLLKAYQELGIDPRAKIGTDDPVEVGRIIKRSLVKYMTSGPIVVMVLKGNRAVEIVRKLVGPTSPHSAPPGTIRGDYSIDSPDLAAEEGRVVFNLVHASDSPSEAEREIRFWFREEEVLE</sequence>
<gene>
    <name type="primary">ndk</name>
    <name type="ordered locus">PAE1561</name>
</gene>
<comment type="function">
    <text evidence="1">Major role in the synthesis of nucleoside triphosphates other than ATP. The ATP gamma phosphate is transferred to the NDP beta phosphate via a ping-pong mechanism, using a phosphorylated active-site intermediate (By similarity).</text>
</comment>
<comment type="catalytic activity">
    <reaction evidence="2">
        <text>a 2'-deoxyribonucleoside 5'-diphosphate + ATP = a 2'-deoxyribonucleoside 5'-triphosphate + ADP</text>
        <dbReference type="Rhea" id="RHEA:44640"/>
        <dbReference type="ChEBI" id="CHEBI:30616"/>
        <dbReference type="ChEBI" id="CHEBI:61560"/>
        <dbReference type="ChEBI" id="CHEBI:73316"/>
        <dbReference type="ChEBI" id="CHEBI:456216"/>
        <dbReference type="EC" id="2.7.4.6"/>
    </reaction>
</comment>
<comment type="catalytic activity">
    <reaction evidence="2">
        <text>a ribonucleoside 5'-diphosphate + ATP = a ribonucleoside 5'-triphosphate + ADP</text>
        <dbReference type="Rhea" id="RHEA:18113"/>
        <dbReference type="ChEBI" id="CHEBI:30616"/>
        <dbReference type="ChEBI" id="CHEBI:57930"/>
        <dbReference type="ChEBI" id="CHEBI:61557"/>
        <dbReference type="ChEBI" id="CHEBI:456216"/>
        <dbReference type="EC" id="2.7.4.6"/>
    </reaction>
</comment>
<comment type="cofactor">
    <cofactor evidence="1">
        <name>Mg(2+)</name>
        <dbReference type="ChEBI" id="CHEBI:18420"/>
    </cofactor>
</comment>
<comment type="subcellular location">
    <subcellularLocation>
        <location evidence="1">Cytoplasm</location>
    </subcellularLocation>
</comment>
<comment type="similarity">
    <text evidence="3">Belongs to the NDK family.</text>
</comment>
<comment type="sequence caution" evidence="3">
    <conflict type="erroneous initiation">
        <sequence resource="EMBL-CDS" id="AAL63565"/>
    </conflict>
</comment>
<proteinExistence type="evidence at protein level"/>
<reference key="1">
    <citation type="journal article" date="2002" name="Proc. Natl. Acad. Sci. U.S.A.">
        <title>Genome sequence of the hyperthermophilic crenarchaeon Pyrobaculum aerophilum.</title>
        <authorList>
            <person name="Fitz-Gibbon S.T."/>
            <person name="Ladner H."/>
            <person name="Kim U.-J."/>
            <person name="Stetter K.O."/>
            <person name="Simon M.I."/>
            <person name="Miller J.H."/>
        </authorList>
    </citation>
    <scope>NUCLEOTIDE SEQUENCE [LARGE SCALE GENOMIC DNA]</scope>
    <source>
        <strain>ATCC 51768 / DSM 7523 / JCM 9630 / CIP 104966 / NBRC 100827 / IM2</strain>
    </source>
</reference>
<keyword id="KW-0002">3D-structure</keyword>
<keyword id="KW-0067">ATP-binding</keyword>
<keyword id="KW-0963">Cytoplasm</keyword>
<keyword id="KW-0418">Kinase</keyword>
<keyword id="KW-0460">Magnesium</keyword>
<keyword id="KW-0479">Metal-binding</keyword>
<keyword id="KW-0546">Nucleotide metabolism</keyword>
<keyword id="KW-0547">Nucleotide-binding</keyword>
<keyword id="KW-0597">Phosphoprotein</keyword>
<keyword id="KW-1185">Reference proteome</keyword>
<keyword id="KW-0808">Transferase</keyword>
<accession>Q8ZWY4</accession>
<feature type="chain" id="PRO_0000137097" description="Nucleoside diphosphate kinase">
    <location>
        <begin position="1"/>
        <end position="183"/>
    </location>
</feature>
<feature type="region of interest" description="Insert">
    <location>
        <begin position="56"/>
        <end position="88"/>
    </location>
</feature>
<feature type="active site" description="Pros-phosphohistidine intermediate" evidence="2">
    <location>
        <position position="160"/>
    </location>
</feature>
<feature type="binding site" evidence="1">
    <location>
        <position position="11"/>
    </location>
    <ligand>
        <name>ATP</name>
        <dbReference type="ChEBI" id="CHEBI:30616"/>
    </ligand>
</feature>
<feature type="binding site" evidence="1">
    <location>
        <position position="120"/>
    </location>
    <ligand>
        <name>ATP</name>
        <dbReference type="ChEBI" id="CHEBI:30616"/>
    </ligand>
</feature>
<feature type="binding site" evidence="1">
    <location>
        <position position="126"/>
    </location>
    <ligand>
        <name>ATP</name>
        <dbReference type="ChEBI" id="CHEBI:30616"/>
    </ligand>
</feature>
<feature type="binding site" evidence="1">
    <location>
        <position position="137"/>
    </location>
    <ligand>
        <name>ATP</name>
        <dbReference type="ChEBI" id="CHEBI:30616"/>
    </ligand>
</feature>
<feature type="binding site" evidence="1">
    <location>
        <position position="157"/>
    </location>
    <ligand>
        <name>ATP</name>
        <dbReference type="ChEBI" id="CHEBI:30616"/>
    </ligand>
</feature>
<feature type="strand" evidence="4">
    <location>
        <begin position="5"/>
        <end position="10"/>
    </location>
</feature>
<feature type="helix" evidence="4">
    <location>
        <begin position="12"/>
        <end position="16"/>
    </location>
</feature>
<feature type="helix" evidence="4">
    <location>
        <begin position="20"/>
        <end position="30"/>
    </location>
</feature>
<feature type="strand" evidence="4">
    <location>
        <begin position="33"/>
        <end position="40"/>
    </location>
</feature>
<feature type="helix" evidence="4">
    <location>
        <begin position="44"/>
        <end position="50"/>
    </location>
</feature>
<feature type="helix" evidence="4">
    <location>
        <begin position="55"/>
        <end position="72"/>
    </location>
</feature>
<feature type="helix" evidence="4">
    <location>
        <begin position="76"/>
        <end position="80"/>
    </location>
</feature>
<feature type="helix" evidence="4">
    <location>
        <begin position="85"/>
        <end position="100"/>
    </location>
</feature>
<feature type="strand" evidence="4">
    <location>
        <begin position="105"/>
        <end position="112"/>
    </location>
</feature>
<feature type="helix" evidence="4">
    <location>
        <begin position="115"/>
        <end position="123"/>
    </location>
</feature>
<feature type="helix" evidence="4">
    <location>
        <begin position="128"/>
        <end position="130"/>
    </location>
</feature>
<feature type="helix" evidence="4">
    <location>
        <begin position="136"/>
        <end position="140"/>
    </location>
</feature>
<feature type="helix" evidence="4">
    <location>
        <begin position="145"/>
        <end position="150"/>
    </location>
</feature>
<feature type="strand" evidence="4">
    <location>
        <begin position="158"/>
        <end position="161"/>
    </location>
</feature>
<feature type="helix" evidence="4">
    <location>
        <begin position="165"/>
        <end position="175"/>
    </location>
</feature>
<feature type="helix" evidence="4">
    <location>
        <begin position="178"/>
        <end position="180"/>
    </location>
</feature>
<dbReference type="EC" id="2.7.4.6"/>
<dbReference type="EMBL" id="AE009441">
    <property type="protein sequence ID" value="AAL63565.1"/>
    <property type="status" value="ALT_INIT"/>
    <property type="molecule type" value="Genomic_DNA"/>
</dbReference>
<dbReference type="RefSeq" id="WP_128621452.1">
    <property type="nucleotide sequence ID" value="NC_003364.1"/>
</dbReference>
<dbReference type="PDB" id="1XQI">
    <property type="method" value="X-ray"/>
    <property type="resolution" value="2.50 A"/>
    <property type="chains" value="A/B/C=1-183"/>
</dbReference>
<dbReference type="PDBsum" id="1XQI"/>
<dbReference type="SMR" id="Q8ZWY4"/>
<dbReference type="FunCoup" id="Q8ZWY4">
    <property type="interactions" value="245"/>
</dbReference>
<dbReference type="STRING" id="178306.PAE1561"/>
<dbReference type="EnsemblBacteria" id="AAL63565">
    <property type="protein sequence ID" value="AAL63565"/>
    <property type="gene ID" value="PAE1561"/>
</dbReference>
<dbReference type="GeneID" id="1465813"/>
<dbReference type="KEGG" id="pai:PAE1561"/>
<dbReference type="PATRIC" id="fig|178306.9.peg.1155"/>
<dbReference type="eggNOG" id="arCOG04313">
    <property type="taxonomic scope" value="Archaea"/>
</dbReference>
<dbReference type="HOGENOM" id="CLU_060216_6_3_2"/>
<dbReference type="InParanoid" id="Q8ZWY4"/>
<dbReference type="BRENDA" id="2.7.4.6">
    <property type="organism ID" value="5239"/>
</dbReference>
<dbReference type="EvolutionaryTrace" id="Q8ZWY4"/>
<dbReference type="Proteomes" id="UP000002439">
    <property type="component" value="Chromosome"/>
</dbReference>
<dbReference type="GO" id="GO:0005737">
    <property type="term" value="C:cytoplasm"/>
    <property type="evidence" value="ECO:0007669"/>
    <property type="project" value="UniProtKB-SubCell"/>
</dbReference>
<dbReference type="GO" id="GO:0005524">
    <property type="term" value="F:ATP binding"/>
    <property type="evidence" value="ECO:0007669"/>
    <property type="project" value="UniProtKB-KW"/>
</dbReference>
<dbReference type="GO" id="GO:0046872">
    <property type="term" value="F:metal ion binding"/>
    <property type="evidence" value="ECO:0007669"/>
    <property type="project" value="UniProtKB-KW"/>
</dbReference>
<dbReference type="GO" id="GO:0004550">
    <property type="term" value="F:nucleoside diphosphate kinase activity"/>
    <property type="evidence" value="ECO:0007669"/>
    <property type="project" value="UniProtKB-EC"/>
</dbReference>
<dbReference type="GO" id="GO:0009117">
    <property type="term" value="P:nucleotide metabolic process"/>
    <property type="evidence" value="ECO:0007669"/>
    <property type="project" value="UniProtKB-KW"/>
</dbReference>
<dbReference type="CDD" id="cd04413">
    <property type="entry name" value="NDPk_I"/>
    <property type="match status" value="1"/>
</dbReference>
<dbReference type="Gene3D" id="3.30.70.141">
    <property type="entry name" value="Nucleoside diphosphate kinase-like domain"/>
    <property type="match status" value="1"/>
</dbReference>
<dbReference type="InterPro" id="IPR034907">
    <property type="entry name" value="NDK-like_dom"/>
</dbReference>
<dbReference type="InterPro" id="IPR036850">
    <property type="entry name" value="NDK-like_dom_sf"/>
</dbReference>
<dbReference type="InterPro" id="IPR023005">
    <property type="entry name" value="Nucleoside_diP_kinase_AS"/>
</dbReference>
<dbReference type="PANTHER" id="PTHR11349">
    <property type="entry name" value="NUCLEOSIDE DIPHOSPHATE KINASE"/>
    <property type="match status" value="1"/>
</dbReference>
<dbReference type="Pfam" id="PF00334">
    <property type="entry name" value="NDK"/>
    <property type="match status" value="2"/>
</dbReference>
<dbReference type="SMART" id="SM00562">
    <property type="entry name" value="NDK"/>
    <property type="match status" value="1"/>
</dbReference>
<dbReference type="SUPFAM" id="SSF54919">
    <property type="entry name" value="Nucleoside diphosphate kinase, NDK"/>
    <property type="match status" value="1"/>
</dbReference>
<dbReference type="PROSITE" id="PS00469">
    <property type="entry name" value="NDPK"/>
    <property type="match status" value="1"/>
</dbReference>
<dbReference type="PROSITE" id="PS51374">
    <property type="entry name" value="NDPK_LIKE"/>
    <property type="match status" value="1"/>
</dbReference>
<protein>
    <recommendedName>
        <fullName>Nucleoside diphosphate kinase</fullName>
        <shortName>NDK</shortName>
        <shortName>NDP kinase</shortName>
        <ecNumber>2.7.4.6</ecNumber>
    </recommendedName>
    <alternativeName>
        <fullName>Nucleoside-2-P kinase</fullName>
    </alternativeName>
</protein>
<evidence type="ECO:0000250" key="1"/>
<evidence type="ECO:0000255" key="2">
    <source>
        <dbReference type="PROSITE-ProRule" id="PRU10030"/>
    </source>
</evidence>
<evidence type="ECO:0000305" key="3"/>
<evidence type="ECO:0007829" key="4">
    <source>
        <dbReference type="PDB" id="1XQI"/>
    </source>
</evidence>
<organism>
    <name type="scientific">Pyrobaculum aerophilum (strain ATCC 51768 / DSM 7523 / JCM 9630 / CIP 104966 / NBRC 100827 / IM2)</name>
    <dbReference type="NCBI Taxonomy" id="178306"/>
    <lineage>
        <taxon>Archaea</taxon>
        <taxon>Thermoproteota</taxon>
        <taxon>Thermoprotei</taxon>
        <taxon>Thermoproteales</taxon>
        <taxon>Thermoproteaceae</taxon>
        <taxon>Pyrobaculum</taxon>
    </lineage>
</organism>
<name>NDK_PYRAE</name>